<reference key="1">
    <citation type="journal article" date="2006" name="PLoS Genet.">
        <title>Comparative genomics of emerging human ehrlichiosis agents.</title>
        <authorList>
            <person name="Dunning Hotopp J.C."/>
            <person name="Lin M."/>
            <person name="Madupu R."/>
            <person name="Crabtree J."/>
            <person name="Angiuoli S.V."/>
            <person name="Eisen J.A."/>
            <person name="Seshadri R."/>
            <person name="Ren Q."/>
            <person name="Wu M."/>
            <person name="Utterback T.R."/>
            <person name="Smith S."/>
            <person name="Lewis M."/>
            <person name="Khouri H."/>
            <person name="Zhang C."/>
            <person name="Niu H."/>
            <person name="Lin Q."/>
            <person name="Ohashi N."/>
            <person name="Zhi N."/>
            <person name="Nelson W.C."/>
            <person name="Brinkac L.M."/>
            <person name="Dodson R.J."/>
            <person name="Rosovitz M.J."/>
            <person name="Sundaram J.P."/>
            <person name="Daugherty S.C."/>
            <person name="Davidsen T."/>
            <person name="Durkin A.S."/>
            <person name="Gwinn M.L."/>
            <person name="Haft D.H."/>
            <person name="Selengut J.D."/>
            <person name="Sullivan S.A."/>
            <person name="Zafar N."/>
            <person name="Zhou L."/>
            <person name="Benahmed F."/>
            <person name="Forberger H."/>
            <person name="Halpin R."/>
            <person name="Mulligan S."/>
            <person name="Robinson J."/>
            <person name="White O."/>
            <person name="Rikihisa Y."/>
            <person name="Tettelin H."/>
        </authorList>
    </citation>
    <scope>NUCLEOTIDE SEQUENCE [LARGE SCALE GENOMIC DNA]</scope>
    <source>
        <strain>ATCC VR-367 / Miyayama</strain>
    </source>
</reference>
<organism>
    <name type="scientific">Neorickettsia sennetsu (strain ATCC VR-367 / Miyayama)</name>
    <name type="common">Ehrlichia sennetsu</name>
    <dbReference type="NCBI Taxonomy" id="222891"/>
    <lineage>
        <taxon>Bacteria</taxon>
        <taxon>Pseudomonadati</taxon>
        <taxon>Pseudomonadota</taxon>
        <taxon>Alphaproteobacteria</taxon>
        <taxon>Rickettsiales</taxon>
        <taxon>Anaplasmataceae</taxon>
        <taxon>Neorickettsia</taxon>
    </lineage>
</organism>
<sequence length="331" mass="37214">MRNSIFEQEETFQDLSLRPKSIEKFVGQQRVVENLQVFIDSAQKRNDSLDHVLFCGPPGLGKTTLAHIISNELESRIHTTAGPLLSKAGDIAAILTNLHKNDILFIDEIHRLPSAVEEVLYPAMEDYHLDLIVGDGPAAKSIRINLAKFTLVAATTRIGMLSNPLRDRFGITLRLDFYTVSELLQLLQQAAERLSVNIENGAMIELAKRSRGTPRIALRLLKRVRDFLEVSDSDVITREFADLALNKMEVDQFGLDKLDYTYMDFIAKNYSDNPVGIKTIAAAISEKEDSIEELIEPYLIKIGFLSRTQRGRRLTGKALDYLSTINSARLP</sequence>
<evidence type="ECO:0000255" key="1">
    <source>
        <dbReference type="HAMAP-Rule" id="MF_00016"/>
    </source>
</evidence>
<gene>
    <name evidence="1" type="primary">ruvB</name>
    <name type="ordered locus">NSE_0575</name>
</gene>
<protein>
    <recommendedName>
        <fullName evidence="1">Holliday junction branch migration complex subunit RuvB</fullName>
        <ecNumber evidence="1">3.6.4.-</ecNumber>
    </recommendedName>
</protein>
<comment type="function">
    <text evidence="1">The RuvA-RuvB-RuvC complex processes Holliday junction (HJ) DNA during genetic recombination and DNA repair, while the RuvA-RuvB complex plays an important role in the rescue of blocked DNA replication forks via replication fork reversal (RFR). RuvA specifically binds to HJ cruciform DNA, conferring on it an open structure. The RuvB hexamer acts as an ATP-dependent pump, pulling dsDNA into and through the RuvAB complex. RuvB forms 2 homohexamers on either side of HJ DNA bound by 1 or 2 RuvA tetramers; 4 subunits per hexamer contact DNA at a time. Coordinated motions by a converter formed by DNA-disengaged RuvB subunits stimulates ATP hydrolysis and nucleotide exchange. Immobilization of the converter enables RuvB to convert the ATP-contained energy into a lever motion, pulling 2 nucleotides of DNA out of the RuvA tetramer per ATP hydrolyzed, thus driving DNA branch migration. The RuvB motors rotate together with the DNA substrate, which together with the progressing nucleotide cycle form the mechanistic basis for DNA recombination by continuous HJ branch migration. Branch migration allows RuvC to scan DNA until it finds its consensus sequence, where it cleaves and resolves cruciform DNA.</text>
</comment>
<comment type="catalytic activity">
    <reaction evidence="1">
        <text>ATP + H2O = ADP + phosphate + H(+)</text>
        <dbReference type="Rhea" id="RHEA:13065"/>
        <dbReference type="ChEBI" id="CHEBI:15377"/>
        <dbReference type="ChEBI" id="CHEBI:15378"/>
        <dbReference type="ChEBI" id="CHEBI:30616"/>
        <dbReference type="ChEBI" id="CHEBI:43474"/>
        <dbReference type="ChEBI" id="CHEBI:456216"/>
    </reaction>
</comment>
<comment type="subunit">
    <text evidence="1">Homohexamer. Forms an RuvA(8)-RuvB(12)-Holliday junction (HJ) complex. HJ DNA is sandwiched between 2 RuvA tetramers; dsDNA enters through RuvA and exits via RuvB. An RuvB hexamer assembles on each DNA strand where it exits the tetramer. Each RuvB hexamer is contacted by two RuvA subunits (via domain III) on 2 adjacent RuvB subunits; this complex drives branch migration. In the full resolvosome a probable DNA-RuvA(4)-RuvB(12)-RuvC(2) complex forms which resolves the HJ.</text>
</comment>
<comment type="subcellular location">
    <subcellularLocation>
        <location evidence="1">Cytoplasm</location>
    </subcellularLocation>
</comment>
<comment type="domain">
    <text evidence="1">Has 3 domains, the large (RuvB-L) and small ATPase (RuvB-S) domains and the C-terminal head (RuvB-H) domain. The head domain binds DNA, while the ATPase domains jointly bind ATP, ADP or are empty depending on the state of the subunit in the translocation cycle. During a single DNA translocation step the structure of each domain remains the same, but their relative positions change.</text>
</comment>
<comment type="similarity">
    <text evidence="1">Belongs to the RuvB family.</text>
</comment>
<name>RUVB_NEOSM</name>
<dbReference type="EC" id="3.6.4.-" evidence="1"/>
<dbReference type="EMBL" id="CP000237">
    <property type="protein sequence ID" value="ABD45850.1"/>
    <property type="molecule type" value="Genomic_DNA"/>
</dbReference>
<dbReference type="RefSeq" id="WP_011451962.1">
    <property type="nucleotide sequence ID" value="NC_007798.1"/>
</dbReference>
<dbReference type="SMR" id="Q2GDJ0"/>
<dbReference type="STRING" id="222891.NSE_0575"/>
<dbReference type="KEGG" id="nse:NSE_0575"/>
<dbReference type="eggNOG" id="COG2255">
    <property type="taxonomic scope" value="Bacteria"/>
</dbReference>
<dbReference type="HOGENOM" id="CLU_055599_1_0_5"/>
<dbReference type="OrthoDB" id="9804478at2"/>
<dbReference type="Proteomes" id="UP000001942">
    <property type="component" value="Chromosome"/>
</dbReference>
<dbReference type="GO" id="GO:0005737">
    <property type="term" value="C:cytoplasm"/>
    <property type="evidence" value="ECO:0007669"/>
    <property type="project" value="UniProtKB-SubCell"/>
</dbReference>
<dbReference type="GO" id="GO:0048476">
    <property type="term" value="C:Holliday junction resolvase complex"/>
    <property type="evidence" value="ECO:0007669"/>
    <property type="project" value="UniProtKB-UniRule"/>
</dbReference>
<dbReference type="GO" id="GO:0005524">
    <property type="term" value="F:ATP binding"/>
    <property type="evidence" value="ECO:0007669"/>
    <property type="project" value="UniProtKB-UniRule"/>
</dbReference>
<dbReference type="GO" id="GO:0016887">
    <property type="term" value="F:ATP hydrolysis activity"/>
    <property type="evidence" value="ECO:0007669"/>
    <property type="project" value="InterPro"/>
</dbReference>
<dbReference type="GO" id="GO:0000400">
    <property type="term" value="F:four-way junction DNA binding"/>
    <property type="evidence" value="ECO:0007669"/>
    <property type="project" value="UniProtKB-UniRule"/>
</dbReference>
<dbReference type="GO" id="GO:0009378">
    <property type="term" value="F:four-way junction helicase activity"/>
    <property type="evidence" value="ECO:0007669"/>
    <property type="project" value="InterPro"/>
</dbReference>
<dbReference type="GO" id="GO:0006310">
    <property type="term" value="P:DNA recombination"/>
    <property type="evidence" value="ECO:0007669"/>
    <property type="project" value="UniProtKB-UniRule"/>
</dbReference>
<dbReference type="GO" id="GO:0006281">
    <property type="term" value="P:DNA repair"/>
    <property type="evidence" value="ECO:0007669"/>
    <property type="project" value="UniProtKB-UniRule"/>
</dbReference>
<dbReference type="CDD" id="cd00009">
    <property type="entry name" value="AAA"/>
    <property type="match status" value="1"/>
</dbReference>
<dbReference type="Gene3D" id="1.10.8.60">
    <property type="match status" value="1"/>
</dbReference>
<dbReference type="Gene3D" id="3.40.50.300">
    <property type="entry name" value="P-loop containing nucleotide triphosphate hydrolases"/>
    <property type="match status" value="1"/>
</dbReference>
<dbReference type="Gene3D" id="1.10.10.10">
    <property type="entry name" value="Winged helix-like DNA-binding domain superfamily/Winged helix DNA-binding domain"/>
    <property type="match status" value="1"/>
</dbReference>
<dbReference type="HAMAP" id="MF_00016">
    <property type="entry name" value="DNA_HJ_migration_RuvB"/>
    <property type="match status" value="1"/>
</dbReference>
<dbReference type="InterPro" id="IPR003593">
    <property type="entry name" value="AAA+_ATPase"/>
</dbReference>
<dbReference type="InterPro" id="IPR041445">
    <property type="entry name" value="AAA_lid_4"/>
</dbReference>
<dbReference type="InterPro" id="IPR004605">
    <property type="entry name" value="DNA_helicase_Holl-junc_RuvB"/>
</dbReference>
<dbReference type="InterPro" id="IPR027417">
    <property type="entry name" value="P-loop_NTPase"/>
</dbReference>
<dbReference type="InterPro" id="IPR008824">
    <property type="entry name" value="RuvB-like_N"/>
</dbReference>
<dbReference type="InterPro" id="IPR008823">
    <property type="entry name" value="RuvB_C"/>
</dbReference>
<dbReference type="InterPro" id="IPR036388">
    <property type="entry name" value="WH-like_DNA-bd_sf"/>
</dbReference>
<dbReference type="InterPro" id="IPR036390">
    <property type="entry name" value="WH_DNA-bd_sf"/>
</dbReference>
<dbReference type="NCBIfam" id="NF000868">
    <property type="entry name" value="PRK00080.1"/>
    <property type="match status" value="1"/>
</dbReference>
<dbReference type="NCBIfam" id="TIGR00635">
    <property type="entry name" value="ruvB"/>
    <property type="match status" value="1"/>
</dbReference>
<dbReference type="PANTHER" id="PTHR42848">
    <property type="match status" value="1"/>
</dbReference>
<dbReference type="PANTHER" id="PTHR42848:SF1">
    <property type="entry name" value="HOLLIDAY JUNCTION BRANCH MIGRATION COMPLEX SUBUNIT RUVB"/>
    <property type="match status" value="1"/>
</dbReference>
<dbReference type="Pfam" id="PF17864">
    <property type="entry name" value="AAA_lid_4"/>
    <property type="match status" value="1"/>
</dbReference>
<dbReference type="Pfam" id="PF05491">
    <property type="entry name" value="RuvB_C"/>
    <property type="match status" value="1"/>
</dbReference>
<dbReference type="Pfam" id="PF05496">
    <property type="entry name" value="RuvB_N"/>
    <property type="match status" value="1"/>
</dbReference>
<dbReference type="SMART" id="SM00382">
    <property type="entry name" value="AAA"/>
    <property type="match status" value="1"/>
</dbReference>
<dbReference type="SUPFAM" id="SSF52540">
    <property type="entry name" value="P-loop containing nucleoside triphosphate hydrolases"/>
    <property type="match status" value="1"/>
</dbReference>
<dbReference type="SUPFAM" id="SSF46785">
    <property type="entry name" value="Winged helix' DNA-binding domain"/>
    <property type="match status" value="1"/>
</dbReference>
<keyword id="KW-0067">ATP-binding</keyword>
<keyword id="KW-0963">Cytoplasm</keyword>
<keyword id="KW-0227">DNA damage</keyword>
<keyword id="KW-0233">DNA recombination</keyword>
<keyword id="KW-0234">DNA repair</keyword>
<keyword id="KW-0238">DNA-binding</keyword>
<keyword id="KW-0378">Hydrolase</keyword>
<keyword id="KW-0547">Nucleotide-binding</keyword>
<feature type="chain" id="PRO_0000322823" description="Holliday junction branch migration complex subunit RuvB">
    <location>
        <begin position="1"/>
        <end position="331"/>
    </location>
</feature>
<feature type="region of interest" description="Large ATPase domain (RuvB-L)" evidence="1">
    <location>
        <begin position="1"/>
        <end position="178"/>
    </location>
</feature>
<feature type="region of interest" description="Small ATPAse domain (RuvB-S)" evidence="1">
    <location>
        <begin position="179"/>
        <end position="249"/>
    </location>
</feature>
<feature type="region of interest" description="Head domain (RuvB-H)" evidence="1">
    <location>
        <begin position="252"/>
        <end position="331"/>
    </location>
</feature>
<feature type="binding site" evidence="1">
    <location>
        <position position="17"/>
    </location>
    <ligand>
        <name>ATP</name>
        <dbReference type="ChEBI" id="CHEBI:30616"/>
    </ligand>
</feature>
<feature type="binding site" evidence="1">
    <location>
        <position position="18"/>
    </location>
    <ligand>
        <name>ATP</name>
        <dbReference type="ChEBI" id="CHEBI:30616"/>
    </ligand>
</feature>
<feature type="binding site" evidence="1">
    <location>
        <position position="59"/>
    </location>
    <ligand>
        <name>ATP</name>
        <dbReference type="ChEBI" id="CHEBI:30616"/>
    </ligand>
</feature>
<feature type="binding site" evidence="1">
    <location>
        <position position="62"/>
    </location>
    <ligand>
        <name>ATP</name>
        <dbReference type="ChEBI" id="CHEBI:30616"/>
    </ligand>
</feature>
<feature type="binding site" evidence="1">
    <location>
        <position position="63"/>
    </location>
    <ligand>
        <name>ATP</name>
        <dbReference type="ChEBI" id="CHEBI:30616"/>
    </ligand>
</feature>
<feature type="binding site" evidence="1">
    <location>
        <position position="63"/>
    </location>
    <ligand>
        <name>Mg(2+)</name>
        <dbReference type="ChEBI" id="CHEBI:18420"/>
    </ligand>
</feature>
<feature type="binding site" evidence="1">
    <location>
        <position position="64"/>
    </location>
    <ligand>
        <name>ATP</name>
        <dbReference type="ChEBI" id="CHEBI:30616"/>
    </ligand>
</feature>
<feature type="binding site" evidence="1">
    <location>
        <begin position="125"/>
        <end position="127"/>
    </location>
    <ligand>
        <name>ATP</name>
        <dbReference type="ChEBI" id="CHEBI:30616"/>
    </ligand>
</feature>
<feature type="binding site" evidence="1">
    <location>
        <position position="168"/>
    </location>
    <ligand>
        <name>ATP</name>
        <dbReference type="ChEBI" id="CHEBI:30616"/>
    </ligand>
</feature>
<feature type="binding site" evidence="1">
    <location>
        <position position="178"/>
    </location>
    <ligand>
        <name>ATP</name>
        <dbReference type="ChEBI" id="CHEBI:30616"/>
    </ligand>
</feature>
<feature type="binding site" evidence="1">
    <location>
        <position position="215"/>
    </location>
    <ligand>
        <name>ATP</name>
        <dbReference type="ChEBI" id="CHEBI:30616"/>
    </ligand>
</feature>
<feature type="binding site" evidence="1">
    <location>
        <position position="307"/>
    </location>
    <ligand>
        <name>DNA</name>
        <dbReference type="ChEBI" id="CHEBI:16991"/>
    </ligand>
</feature>
<feature type="binding site" evidence="1">
    <location>
        <position position="312"/>
    </location>
    <ligand>
        <name>DNA</name>
        <dbReference type="ChEBI" id="CHEBI:16991"/>
    </ligand>
</feature>
<proteinExistence type="inferred from homology"/>
<accession>Q2GDJ0</accession>